<dbReference type="EMBL" id="BC046709">
    <property type="protein sequence ID" value="AAH46709.1"/>
    <property type="molecule type" value="mRNA"/>
</dbReference>
<dbReference type="EMBL" id="CM004472">
    <property type="protein sequence ID" value="OCT84080.1"/>
    <property type="molecule type" value="Genomic_DNA"/>
</dbReference>
<dbReference type="RefSeq" id="NP_001080263.1">
    <property type="nucleotide sequence ID" value="NM_001086794.2"/>
</dbReference>
<dbReference type="SMR" id="Q7ZWU1"/>
<dbReference type="STRING" id="8355.Q7ZWU1"/>
<dbReference type="PaxDb" id="8355-Q7ZWU1"/>
<dbReference type="DNASU" id="379955"/>
<dbReference type="GeneID" id="379955"/>
<dbReference type="KEGG" id="xla:379955"/>
<dbReference type="AGR" id="Xenbase:XB-GENE-958367"/>
<dbReference type="CTD" id="379955"/>
<dbReference type="Xenbase" id="XB-GENE-958367">
    <property type="gene designation" value="stip1.L"/>
</dbReference>
<dbReference type="OMA" id="LCEYKLG"/>
<dbReference type="OrthoDB" id="2423701at2759"/>
<dbReference type="Proteomes" id="UP000186698">
    <property type="component" value="Chromosome 4L"/>
</dbReference>
<dbReference type="Proteomes" id="UP000694892">
    <property type="component" value="Chromosome 4L"/>
</dbReference>
<dbReference type="Bgee" id="379955">
    <property type="expression patterns" value="Expressed in zone of skin and 19 other cell types or tissues"/>
</dbReference>
<dbReference type="GO" id="GO:0120293">
    <property type="term" value="C:dynein axonemal particle"/>
    <property type="evidence" value="ECO:0000314"/>
    <property type="project" value="UniProtKB"/>
</dbReference>
<dbReference type="GO" id="GO:0005634">
    <property type="term" value="C:nucleus"/>
    <property type="evidence" value="ECO:0007669"/>
    <property type="project" value="UniProtKB-SubCell"/>
</dbReference>
<dbReference type="GO" id="GO:0051879">
    <property type="term" value="F:Hsp90 protein binding"/>
    <property type="evidence" value="ECO:0000318"/>
    <property type="project" value="GO_Central"/>
</dbReference>
<dbReference type="FunFam" id="1.10.260.100:FF:000004">
    <property type="entry name" value="Putative stress-induced-phosphoprotein 1"/>
    <property type="match status" value="1"/>
</dbReference>
<dbReference type="FunFam" id="1.25.40.10:FF:000010">
    <property type="entry name" value="Stress-induced phosphoprotein 1"/>
    <property type="match status" value="1"/>
</dbReference>
<dbReference type="FunFam" id="1.25.40.10:FF:000020">
    <property type="entry name" value="Stress-induced phosphoprotein 1"/>
    <property type="match status" value="1"/>
</dbReference>
<dbReference type="FunFam" id="1.10.260.100:FF:000002">
    <property type="entry name" value="Stress-induced-phosphoprotein 1 (Hsp70/Hsp90-organizing)"/>
    <property type="match status" value="1"/>
</dbReference>
<dbReference type="FunFam" id="1.25.40.10:FF:000027">
    <property type="entry name" value="stress-induced-phosphoprotein 1 isoform X1"/>
    <property type="match status" value="1"/>
</dbReference>
<dbReference type="Gene3D" id="1.10.260.100">
    <property type="match status" value="2"/>
</dbReference>
<dbReference type="Gene3D" id="1.25.40.10">
    <property type="entry name" value="Tetratricopeptide repeat domain"/>
    <property type="match status" value="3"/>
</dbReference>
<dbReference type="InterPro" id="IPR041243">
    <property type="entry name" value="STI1/HOP_DP"/>
</dbReference>
<dbReference type="InterPro" id="IPR006636">
    <property type="entry name" value="STI1_HS-bd"/>
</dbReference>
<dbReference type="InterPro" id="IPR011990">
    <property type="entry name" value="TPR-like_helical_dom_sf"/>
</dbReference>
<dbReference type="InterPro" id="IPR019734">
    <property type="entry name" value="TPR_rpt"/>
</dbReference>
<dbReference type="PANTHER" id="PTHR22904:SF523">
    <property type="entry name" value="STRESS-INDUCED-PHOSPHOPROTEIN 1"/>
    <property type="match status" value="1"/>
</dbReference>
<dbReference type="PANTHER" id="PTHR22904">
    <property type="entry name" value="TPR REPEAT CONTAINING PROTEIN"/>
    <property type="match status" value="1"/>
</dbReference>
<dbReference type="Pfam" id="PF17830">
    <property type="entry name" value="STI1-HOP_DP"/>
    <property type="match status" value="2"/>
</dbReference>
<dbReference type="Pfam" id="PF00515">
    <property type="entry name" value="TPR_1"/>
    <property type="match status" value="1"/>
</dbReference>
<dbReference type="Pfam" id="PF13414">
    <property type="entry name" value="TPR_11"/>
    <property type="match status" value="1"/>
</dbReference>
<dbReference type="Pfam" id="PF13424">
    <property type="entry name" value="TPR_12"/>
    <property type="match status" value="1"/>
</dbReference>
<dbReference type="Pfam" id="PF13181">
    <property type="entry name" value="TPR_8"/>
    <property type="match status" value="2"/>
</dbReference>
<dbReference type="SMART" id="SM00727">
    <property type="entry name" value="STI1"/>
    <property type="match status" value="2"/>
</dbReference>
<dbReference type="SMART" id="SM00028">
    <property type="entry name" value="TPR"/>
    <property type="match status" value="9"/>
</dbReference>
<dbReference type="SUPFAM" id="SSF48452">
    <property type="entry name" value="TPR-like"/>
    <property type="match status" value="3"/>
</dbReference>
<dbReference type="PROSITE" id="PS50005">
    <property type="entry name" value="TPR"/>
    <property type="match status" value="9"/>
</dbReference>
<dbReference type="PROSITE" id="PS50293">
    <property type="entry name" value="TPR_REGION"/>
    <property type="match status" value="2"/>
</dbReference>
<evidence type="ECO:0000250" key="1">
    <source>
        <dbReference type="UniProtKB" id="O35814"/>
    </source>
</evidence>
<evidence type="ECO:0000250" key="2">
    <source>
        <dbReference type="UniProtKB" id="P31948"/>
    </source>
</evidence>
<evidence type="ECO:0000250" key="3">
    <source>
        <dbReference type="UniProtKB" id="Q60864"/>
    </source>
</evidence>
<evidence type="ECO:0000255" key="4"/>
<evidence type="ECO:0000255" key="5">
    <source>
        <dbReference type="PROSITE-ProRule" id="PRU00339"/>
    </source>
</evidence>
<evidence type="ECO:0000256" key="6">
    <source>
        <dbReference type="SAM" id="MobiDB-lite"/>
    </source>
</evidence>
<evidence type="ECO:0000269" key="7">
    <source>
    </source>
</evidence>
<evidence type="ECO:0000312" key="8">
    <source>
        <dbReference type="EMBL" id="AAH46709.1"/>
    </source>
</evidence>
<evidence type="ECO:0000312" key="9">
    <source>
        <dbReference type="EMBL" id="OCT84080.1"/>
    </source>
</evidence>
<evidence type="ECO:0000312" key="10">
    <source>
        <dbReference type="Proteomes" id="UP000186698"/>
    </source>
</evidence>
<evidence type="ECO:0000312" key="11">
    <source>
        <dbReference type="Xenbase" id="XB-GENE-958367"/>
    </source>
</evidence>
<comment type="function">
    <text evidence="1 2">Acts as a co-chaperone for HSP90AA1 (By similarity). Mediates the association of the molecular chaperones HSPA8/HSC70 and HSP90 (By similarity).</text>
</comment>
<comment type="subcellular location">
    <subcellularLocation>
        <location evidence="3">Cytoplasm</location>
    </subcellularLocation>
    <subcellularLocation>
        <location evidence="3">Nucleus</location>
    </subcellularLocation>
    <subcellularLocation>
        <location evidence="7">Dynein axonemal particle</location>
    </subcellularLocation>
</comment>
<accession>Q7ZWU1</accession>
<gene>
    <name evidence="11" type="primary">stip1</name>
    <name evidence="9" type="ORF">XELAEV_18022218mg</name>
</gene>
<feature type="chain" id="PRO_0000452442" description="Stress-induced-phosphoprotein 1">
    <location>
        <begin position="1"/>
        <end position="543"/>
    </location>
</feature>
<feature type="repeat" description="TPR 1" evidence="4 5">
    <location>
        <begin position="4"/>
        <end position="37"/>
    </location>
</feature>
<feature type="repeat" description="TPR 2" evidence="5">
    <location>
        <begin position="38"/>
        <end position="71"/>
    </location>
</feature>
<feature type="repeat" description="TPR 11" evidence="4">
    <location>
        <begin position="39"/>
        <end position="71"/>
    </location>
</feature>
<feature type="repeat" description="TPR 3" evidence="4 5">
    <location>
        <begin position="72"/>
        <end position="105"/>
    </location>
</feature>
<feature type="domain" description="STI1 1" evidence="4">
    <location>
        <begin position="130"/>
        <end position="169"/>
    </location>
</feature>
<feature type="repeat" description="TPR 4" evidence="4 5">
    <location>
        <begin position="225"/>
        <end position="258"/>
    </location>
</feature>
<feature type="repeat" description="TPR 5" evidence="5">
    <location>
        <begin position="259"/>
        <end position="292"/>
    </location>
</feature>
<feature type="repeat" description="TPR 14" evidence="4">
    <location>
        <begin position="260"/>
        <end position="292"/>
    </location>
</feature>
<feature type="repeat" description="TPR 6" evidence="4 5">
    <location>
        <begin position="300"/>
        <end position="333"/>
    </location>
</feature>
<feature type="repeat" description="TPR 7" evidence="4 5">
    <location>
        <begin position="360"/>
        <end position="393"/>
    </location>
</feature>
<feature type="repeat" description="TPR 8" evidence="5">
    <location>
        <begin position="394"/>
        <end position="427"/>
    </location>
</feature>
<feature type="repeat" description="TPR 17" evidence="4">
    <location>
        <begin position="395"/>
        <end position="427"/>
    </location>
</feature>
<feature type="repeat" description="TPR 9" evidence="4 5">
    <location>
        <begin position="428"/>
        <end position="461"/>
    </location>
</feature>
<feature type="domain" description="STI1 2" evidence="4">
    <location>
        <begin position="492"/>
        <end position="531"/>
    </location>
</feature>
<feature type="region of interest" description="Disordered" evidence="6">
    <location>
        <begin position="189"/>
        <end position="235"/>
    </location>
</feature>
<feature type="compositionally biased region" description="Basic and acidic residues" evidence="6">
    <location>
        <begin position="205"/>
        <end position="235"/>
    </location>
</feature>
<sequence length="543" mass="62107">MEAANALKEKGNKALSAGNLDEAVKCYTEAIKLDPKNHVLYSNRSAAYAKKKEFTKALEDGSKTVELKADWGKGYSRKAAALEFLNRFEEAKKTYEEGLRHEPTNAQLKEGLQNMEARLAEKKFMNPFNSPNLFQKLESDPRTRALLSDPSYKELIEQLRNKPSDLGTKLQDPRVMTTLSVLLGVELGNVDEEEEDTPPPPPPQPKKETKPEPMEEDLPENKKQAQKEKELGNEAYKKKDFETALKHYGQARELDPANMTYITNQAAVYFEMGDYSKCRELCEKAIEVGRENREDYRLIAKAYARIGNSYFKEEKNKEAIQFFNKSLAEHRTPEVLKKCQQAEKILKEQERVAYINPDLALEAKNKGNESFQKGDYPQAMKHYSEAIKRNPNDAKLYSNRAACYTKLLEFLLAVKDCEECIRLEPSFIKGYTRKAAALEAMKDFTKAMDAYQKAMELDSTSKEATDGYQRCMMSQYNRNDNPEDVKRRAMADPEVQQIMSDPAMRLILEQMQKDPQALSDHLKNPVIAQKIQKLMDVGLIAIR</sequence>
<name>STIP1_XENLA</name>
<proteinExistence type="evidence at transcript level"/>
<reference evidence="8" key="1">
    <citation type="submission" date="2003-02" db="EMBL/GenBank/DDBJ databases">
        <authorList>
            <consortium name="NIH - Xenopus Gene Collection (XGC) project"/>
        </authorList>
    </citation>
    <scope>NUCLEOTIDE SEQUENCE [LARGE SCALE MRNA]</scope>
    <source>
        <tissue evidence="8">Embryo</tissue>
    </source>
</reference>
<reference evidence="10" key="2">
    <citation type="journal article" date="2016" name="Nature">
        <title>Genome evolution in the allotetraploid frog Xenopus laevis.</title>
        <authorList>
            <person name="Session A.M."/>
            <person name="Uno Y."/>
            <person name="Kwon T."/>
            <person name="Chapman J.A."/>
            <person name="Toyoda A."/>
            <person name="Takahashi S."/>
            <person name="Fukui A."/>
            <person name="Hikosaka A."/>
            <person name="Suzuki A."/>
            <person name="Kondo M."/>
            <person name="van Heeringen S.J."/>
            <person name="Quigley I."/>
            <person name="Heinz S."/>
            <person name="Ogino H."/>
            <person name="Ochi H."/>
            <person name="Hellsten U."/>
            <person name="Lyons J.B."/>
            <person name="Simakov O."/>
            <person name="Putnam N."/>
            <person name="Stites J."/>
            <person name="Kuroki Y."/>
            <person name="Tanaka T."/>
            <person name="Michiue T."/>
            <person name="Watanabe M."/>
            <person name="Bogdanovic O."/>
            <person name="Lister R."/>
            <person name="Georgiou G."/>
            <person name="Paranjpe S.S."/>
            <person name="van Kruijsbergen I."/>
            <person name="Shu S."/>
            <person name="Carlson J."/>
            <person name="Kinoshita T."/>
            <person name="Ohta Y."/>
            <person name="Mawaribuchi S."/>
            <person name="Jenkins J."/>
            <person name="Grimwood J."/>
            <person name="Schmutz J."/>
            <person name="Mitros T."/>
            <person name="Mozaffari S.V."/>
            <person name="Suzuki Y."/>
            <person name="Haramoto Y."/>
            <person name="Yamamoto T.S."/>
            <person name="Takagi C."/>
            <person name="Heald R."/>
            <person name="Miller K."/>
            <person name="Haudenschild C."/>
            <person name="Kitzman J."/>
            <person name="Nakayama T."/>
            <person name="Izutsu Y."/>
            <person name="Robert J."/>
            <person name="Fortriede J."/>
            <person name="Burns K."/>
            <person name="Lotay V."/>
            <person name="Karimi K."/>
            <person name="Yasuoka Y."/>
            <person name="Dichmann D.S."/>
            <person name="Flajnik M.F."/>
            <person name="Houston D.W."/>
            <person name="Shendure J."/>
            <person name="DuPasquier L."/>
            <person name="Vize P.D."/>
            <person name="Zorn A.M."/>
            <person name="Ito M."/>
            <person name="Marcotte E.M."/>
            <person name="Wallingford J.B."/>
            <person name="Ito Y."/>
            <person name="Asashima M."/>
            <person name="Ueno N."/>
            <person name="Matsuda Y."/>
            <person name="Veenstra G.J."/>
            <person name="Fujiyama A."/>
            <person name="Harland R.M."/>
            <person name="Taira M."/>
            <person name="Rokhsar D.S."/>
        </authorList>
    </citation>
    <scope>NUCLEOTIDE SEQUENCE [LARGE SCALE GENOMIC DNA]</scope>
    <source>
        <strain evidence="10">J</strain>
    </source>
</reference>
<reference evidence="9" key="3">
    <citation type="submission" date="2016-05" db="EMBL/GenBank/DDBJ databases">
        <title>WGS assembly of Xenopus laevis.</title>
        <authorList>
            <person name="Session A."/>
            <person name="Uno Y."/>
            <person name="Kwon T."/>
            <person name="Chapman J."/>
            <person name="Toyoda A."/>
            <person name="Takahashi S."/>
            <person name="Fukui A."/>
            <person name="Hikosaka A."/>
            <person name="Putnam N."/>
            <person name="Stites J."/>
            <person name="Van Heeringen S."/>
            <person name="Quigley I."/>
            <person name="Heinz S."/>
            <person name="Hellsten U."/>
            <person name="Lyons J."/>
            <person name="Suzuki A."/>
            <person name="Kondo M."/>
            <person name="Ogino H."/>
            <person name="Ochi H."/>
            <person name="Bogdanovic O."/>
            <person name="Lister R."/>
            <person name="Georgiou G."/>
            <person name="Paranjpe S."/>
            <person name="Van Kruijsbergen I."/>
            <person name="Mozaffari S."/>
            <person name="Shu S."/>
            <person name="Schmutz J."/>
            <person name="Jenkins J."/>
            <person name="Grimwood J."/>
            <person name="Carlson J."/>
            <person name="Mitros T."/>
            <person name="Simakov O."/>
            <person name="Heald R."/>
            <person name="Miller K."/>
            <person name="Haudenschild C."/>
            <person name="Kuroki Y."/>
            <person name="Tanaka T."/>
            <person name="Michiue T."/>
            <person name="Watanabe M."/>
            <person name="Kinoshita T."/>
            <person name="Ohta Y."/>
            <person name="Mawaribuchi S."/>
            <person name="Suzuki Y."/>
            <person name="Haramoto Y."/>
            <person name="Yamamoto T."/>
            <person name="Takagi C."/>
            <person name="Kitzman J."/>
            <person name="Shendure J."/>
            <person name="Nakayama T."/>
            <person name="Izutsu Y."/>
            <person name="Robert J."/>
            <person name="Dichmann D."/>
            <person name="Flajnik M."/>
            <person name="Houston D."/>
            <person name="Marcotte E."/>
            <person name="Wallingford J."/>
            <person name="Ito Y."/>
            <person name="Asashima M."/>
            <person name="Ueno N."/>
            <person name="Matsuda Y."/>
            <person name="Jan Veenstra G."/>
            <person name="Fujiyama A."/>
            <person name="Harland R."/>
            <person name="Taira M."/>
            <person name="Rokhsar D.S."/>
        </authorList>
    </citation>
    <scope>NUCLEOTIDE SEQUENCE</scope>
    <source>
        <strain evidence="9">J</strain>
        <tissue evidence="9">Blood</tissue>
    </source>
</reference>
<reference key="4">
    <citation type="journal article" date="2020" name="Elife">
        <title>Functional partitioning of a liquid-like organelle during assembly of axonemal dyneins.</title>
        <authorList>
            <person name="Lee C."/>
            <person name="Cox R.M."/>
            <person name="Papoulas O."/>
            <person name="Horani A."/>
            <person name="Drew K."/>
            <person name="Devitt C.C."/>
            <person name="Brody S.L."/>
            <person name="Marcotte E.M."/>
            <person name="Wallingford J.B."/>
        </authorList>
    </citation>
    <scope>SUBCELLULAR LOCATION</scope>
</reference>
<protein>
    <recommendedName>
        <fullName>Stress-induced-phosphoprotein 1</fullName>
        <shortName>STI1</shortName>
    </recommendedName>
</protein>
<keyword id="KW-0963">Cytoplasm</keyword>
<keyword id="KW-0539">Nucleus</keyword>
<keyword id="KW-1185">Reference proteome</keyword>
<keyword id="KW-0677">Repeat</keyword>
<keyword id="KW-0802">TPR repeat</keyword>
<organism evidence="8">
    <name type="scientific">Xenopus laevis</name>
    <name type="common">African clawed frog</name>
    <dbReference type="NCBI Taxonomy" id="8355"/>
    <lineage>
        <taxon>Eukaryota</taxon>
        <taxon>Metazoa</taxon>
        <taxon>Chordata</taxon>
        <taxon>Craniata</taxon>
        <taxon>Vertebrata</taxon>
        <taxon>Euteleostomi</taxon>
        <taxon>Amphibia</taxon>
        <taxon>Batrachia</taxon>
        <taxon>Anura</taxon>
        <taxon>Pipoidea</taxon>
        <taxon>Pipidae</taxon>
        <taxon>Xenopodinae</taxon>
        <taxon>Xenopus</taxon>
        <taxon>Xenopus</taxon>
    </lineage>
</organism>